<accession>Q9V784</accession>
<accession>Q8STA1</accession>
<comment type="function">
    <text evidence="2">May play a role in the maintenance of the structure of mitochondrial cristae.</text>
</comment>
<comment type="subunit">
    <text evidence="2">Associates with the mitochondrial contact site and cristae organizing system (MICOS) complex (also known as MINOS or MitOS complex).</text>
</comment>
<comment type="subcellular location">
    <subcellularLocation>
        <location evidence="2">Mitochondrion outer membrane</location>
        <topology evidence="1">Multi-pass membrane protein</topology>
    </subcellularLocation>
</comment>
<comment type="domain">
    <text evidence="1">Its C-terminal part seems to contain many membrane-spanning sided beta-sheets, that have the potential to adopt a transmembrane beta-barrel type structure.</text>
</comment>
<comment type="similarity">
    <text evidence="4">Belongs to the SAM50/omp85 family.</text>
</comment>
<gene>
    <name type="ORF">CG7639</name>
</gene>
<proteinExistence type="evidence at transcript level"/>
<reference key="1">
    <citation type="journal article" date="2000" name="Science">
        <title>The genome sequence of Drosophila melanogaster.</title>
        <authorList>
            <person name="Adams M.D."/>
            <person name="Celniker S.E."/>
            <person name="Holt R.A."/>
            <person name="Evans C.A."/>
            <person name="Gocayne J.D."/>
            <person name="Amanatides P.G."/>
            <person name="Scherer S.E."/>
            <person name="Li P.W."/>
            <person name="Hoskins R.A."/>
            <person name="Galle R.F."/>
            <person name="George R.A."/>
            <person name="Lewis S.E."/>
            <person name="Richards S."/>
            <person name="Ashburner M."/>
            <person name="Henderson S.N."/>
            <person name="Sutton G.G."/>
            <person name="Wortman J.R."/>
            <person name="Yandell M.D."/>
            <person name="Zhang Q."/>
            <person name="Chen L.X."/>
            <person name="Brandon R.C."/>
            <person name="Rogers Y.-H.C."/>
            <person name="Blazej R.G."/>
            <person name="Champe M."/>
            <person name="Pfeiffer B.D."/>
            <person name="Wan K.H."/>
            <person name="Doyle C."/>
            <person name="Baxter E.G."/>
            <person name="Helt G."/>
            <person name="Nelson C.R."/>
            <person name="Miklos G.L.G."/>
            <person name="Abril J.F."/>
            <person name="Agbayani A."/>
            <person name="An H.-J."/>
            <person name="Andrews-Pfannkoch C."/>
            <person name="Baldwin D."/>
            <person name="Ballew R.M."/>
            <person name="Basu A."/>
            <person name="Baxendale J."/>
            <person name="Bayraktaroglu L."/>
            <person name="Beasley E.M."/>
            <person name="Beeson K.Y."/>
            <person name="Benos P.V."/>
            <person name="Berman B.P."/>
            <person name="Bhandari D."/>
            <person name="Bolshakov S."/>
            <person name="Borkova D."/>
            <person name="Botchan M.R."/>
            <person name="Bouck J."/>
            <person name="Brokstein P."/>
            <person name="Brottier P."/>
            <person name="Burtis K.C."/>
            <person name="Busam D.A."/>
            <person name="Butler H."/>
            <person name="Cadieu E."/>
            <person name="Center A."/>
            <person name="Chandra I."/>
            <person name="Cherry J.M."/>
            <person name="Cawley S."/>
            <person name="Dahlke C."/>
            <person name="Davenport L.B."/>
            <person name="Davies P."/>
            <person name="de Pablos B."/>
            <person name="Delcher A."/>
            <person name="Deng Z."/>
            <person name="Mays A.D."/>
            <person name="Dew I."/>
            <person name="Dietz S.M."/>
            <person name="Dodson K."/>
            <person name="Doup L.E."/>
            <person name="Downes M."/>
            <person name="Dugan-Rocha S."/>
            <person name="Dunkov B.C."/>
            <person name="Dunn P."/>
            <person name="Durbin K.J."/>
            <person name="Evangelista C.C."/>
            <person name="Ferraz C."/>
            <person name="Ferriera S."/>
            <person name="Fleischmann W."/>
            <person name="Fosler C."/>
            <person name="Gabrielian A.E."/>
            <person name="Garg N.S."/>
            <person name="Gelbart W.M."/>
            <person name="Glasser K."/>
            <person name="Glodek A."/>
            <person name="Gong F."/>
            <person name="Gorrell J.H."/>
            <person name="Gu Z."/>
            <person name="Guan P."/>
            <person name="Harris M."/>
            <person name="Harris N.L."/>
            <person name="Harvey D.A."/>
            <person name="Heiman T.J."/>
            <person name="Hernandez J.R."/>
            <person name="Houck J."/>
            <person name="Hostin D."/>
            <person name="Houston K.A."/>
            <person name="Howland T.J."/>
            <person name="Wei M.-H."/>
            <person name="Ibegwam C."/>
            <person name="Jalali M."/>
            <person name="Kalush F."/>
            <person name="Karpen G.H."/>
            <person name="Ke Z."/>
            <person name="Kennison J.A."/>
            <person name="Ketchum K.A."/>
            <person name="Kimmel B.E."/>
            <person name="Kodira C.D."/>
            <person name="Kraft C.L."/>
            <person name="Kravitz S."/>
            <person name="Kulp D."/>
            <person name="Lai Z."/>
            <person name="Lasko P."/>
            <person name="Lei Y."/>
            <person name="Levitsky A.A."/>
            <person name="Li J.H."/>
            <person name="Li Z."/>
            <person name="Liang Y."/>
            <person name="Lin X."/>
            <person name="Liu X."/>
            <person name="Mattei B."/>
            <person name="McIntosh T.C."/>
            <person name="McLeod M.P."/>
            <person name="McPherson D."/>
            <person name="Merkulov G."/>
            <person name="Milshina N.V."/>
            <person name="Mobarry C."/>
            <person name="Morris J."/>
            <person name="Moshrefi A."/>
            <person name="Mount S.M."/>
            <person name="Moy M."/>
            <person name="Murphy B."/>
            <person name="Murphy L."/>
            <person name="Muzny D.M."/>
            <person name="Nelson D.L."/>
            <person name="Nelson D.R."/>
            <person name="Nelson K.A."/>
            <person name="Nixon K."/>
            <person name="Nusskern D.R."/>
            <person name="Pacleb J.M."/>
            <person name="Palazzolo M."/>
            <person name="Pittman G.S."/>
            <person name="Pan S."/>
            <person name="Pollard J."/>
            <person name="Puri V."/>
            <person name="Reese M.G."/>
            <person name="Reinert K."/>
            <person name="Remington K."/>
            <person name="Saunders R.D.C."/>
            <person name="Scheeler F."/>
            <person name="Shen H."/>
            <person name="Shue B.C."/>
            <person name="Siden-Kiamos I."/>
            <person name="Simpson M."/>
            <person name="Skupski M.P."/>
            <person name="Smith T.J."/>
            <person name="Spier E."/>
            <person name="Spradling A.C."/>
            <person name="Stapleton M."/>
            <person name="Strong R."/>
            <person name="Sun E."/>
            <person name="Svirskas R."/>
            <person name="Tector C."/>
            <person name="Turner R."/>
            <person name="Venter E."/>
            <person name="Wang A.H."/>
            <person name="Wang X."/>
            <person name="Wang Z.-Y."/>
            <person name="Wassarman D.A."/>
            <person name="Weinstock G.M."/>
            <person name="Weissenbach J."/>
            <person name="Williams S.M."/>
            <person name="Woodage T."/>
            <person name="Worley K.C."/>
            <person name="Wu D."/>
            <person name="Yang S."/>
            <person name="Yao Q.A."/>
            <person name="Ye J."/>
            <person name="Yeh R.-F."/>
            <person name="Zaveri J.S."/>
            <person name="Zhan M."/>
            <person name="Zhang G."/>
            <person name="Zhao Q."/>
            <person name="Zheng L."/>
            <person name="Zheng X.H."/>
            <person name="Zhong F.N."/>
            <person name="Zhong W."/>
            <person name="Zhou X."/>
            <person name="Zhu S.C."/>
            <person name="Zhu X."/>
            <person name="Smith H.O."/>
            <person name="Gibbs R.A."/>
            <person name="Myers E.W."/>
            <person name="Rubin G.M."/>
            <person name="Venter J.C."/>
        </authorList>
    </citation>
    <scope>NUCLEOTIDE SEQUENCE [LARGE SCALE GENOMIC DNA]</scope>
    <source>
        <strain>Berkeley</strain>
    </source>
</reference>
<reference key="2">
    <citation type="journal article" date="2002" name="Genome Biol.">
        <title>Annotation of the Drosophila melanogaster euchromatic genome: a systematic review.</title>
        <authorList>
            <person name="Misra S."/>
            <person name="Crosby M.A."/>
            <person name="Mungall C.J."/>
            <person name="Matthews B.B."/>
            <person name="Campbell K.S."/>
            <person name="Hradecky P."/>
            <person name="Huang Y."/>
            <person name="Kaminker J.S."/>
            <person name="Millburn G.H."/>
            <person name="Prochnik S.E."/>
            <person name="Smith C.D."/>
            <person name="Tupy J.L."/>
            <person name="Whitfield E.J."/>
            <person name="Bayraktaroglu L."/>
            <person name="Berman B.P."/>
            <person name="Bettencourt B.R."/>
            <person name="Celniker S.E."/>
            <person name="de Grey A.D.N.J."/>
            <person name="Drysdale R.A."/>
            <person name="Harris N.L."/>
            <person name="Richter J."/>
            <person name="Russo S."/>
            <person name="Schroeder A.J."/>
            <person name="Shu S.Q."/>
            <person name="Stapleton M."/>
            <person name="Yamada C."/>
            <person name="Ashburner M."/>
            <person name="Gelbart W.M."/>
            <person name="Rubin G.M."/>
            <person name="Lewis S.E."/>
        </authorList>
    </citation>
    <scope>GENOME REANNOTATION</scope>
    <source>
        <strain>Berkeley</strain>
    </source>
</reference>
<reference key="3">
    <citation type="journal article" date="2002" name="Genome Biol.">
        <title>A Drosophila full-length cDNA resource.</title>
        <authorList>
            <person name="Stapleton M."/>
            <person name="Carlson J.W."/>
            <person name="Brokstein P."/>
            <person name="Yu C."/>
            <person name="Champe M."/>
            <person name="George R.A."/>
            <person name="Guarin H."/>
            <person name="Kronmiller B."/>
            <person name="Pacleb J.M."/>
            <person name="Park S."/>
            <person name="Wan K.H."/>
            <person name="Rubin G.M."/>
            <person name="Celniker S.E."/>
        </authorList>
    </citation>
    <scope>NUCLEOTIDE SEQUENCE [LARGE SCALE MRNA]</scope>
    <source>
        <strain>Berkeley</strain>
        <tissue>Embryo</tissue>
    </source>
</reference>
<sequence>MPKSGRDGGASKDSKYDLSKISARVDRVNVSGLLRTHNDYVMRAADGLFKASNFQDLMLEAMSTKSYLHELGIFKDVSVHIDVSRGADASPQGYEVTFKGNEMSRMMGSAGTEIGQNEGSLRTELTIPNILGRGENISLQGSYSSTRANDLQLKFWKPFFHTRFKENRPEMSFSIFRQTDRFDISSFQTTNIGYLVDFSAHTMVGVDLTHSLQYENAIRDVGLLNKSVPFAIRDHCGPKLASLLRYSVVYDNRDGNVFPTRGIYLKSVNEYCGLGGNVAYTSSTAHGELNVPLFAGLVAQFCARVGVVKETKNTTQLPISSLFYCGGPLTLRGFKFGGAGPVVESTPIGAQSFWCTGAHLWAPLPFAGVFKNLASHFRMHFFYNIGNNNSFSTENMRSAFGMGLAVKLAERARIELNYCVPVRHQDTDRILNGFQFGIGYEFV</sequence>
<protein>
    <recommendedName>
        <fullName>SAM50-like protein CG7639</fullName>
    </recommendedName>
</protein>
<dbReference type="EMBL" id="AE013599">
    <property type="protein sequence ID" value="AAS64850.1"/>
    <property type="molecule type" value="Genomic_DNA"/>
</dbReference>
<dbReference type="EMBL" id="AY071492">
    <property type="protein sequence ID" value="AAL49114.1"/>
    <property type="molecule type" value="mRNA"/>
</dbReference>
<dbReference type="EMBL" id="AY094882">
    <property type="protein sequence ID" value="AAM11235.1"/>
    <property type="molecule type" value="mRNA"/>
</dbReference>
<dbReference type="RefSeq" id="NP_995838.1">
    <property type="nucleotide sequence ID" value="NM_206116.3"/>
</dbReference>
<dbReference type="SMR" id="Q9V784"/>
<dbReference type="BioGRID" id="62416">
    <property type="interactions" value="10"/>
</dbReference>
<dbReference type="FunCoup" id="Q9V784">
    <property type="interactions" value="1757"/>
</dbReference>
<dbReference type="IntAct" id="Q9V784">
    <property type="interactions" value="9"/>
</dbReference>
<dbReference type="STRING" id="7227.FBpp0086555"/>
<dbReference type="TCDB" id="1.B.33.3.5">
    <property type="family name" value="the outer membrane protein insertion porin (bam complex) (ompip) family"/>
</dbReference>
<dbReference type="PaxDb" id="7227-FBpp0086555"/>
<dbReference type="DNASU" id="36675"/>
<dbReference type="EnsemblMetazoa" id="FBtr0087424">
    <property type="protein sequence ID" value="FBpp0086555"/>
    <property type="gene ID" value="FBgn0033989"/>
</dbReference>
<dbReference type="GeneID" id="36675"/>
<dbReference type="KEGG" id="dme:Dmel_CG7639"/>
<dbReference type="UCSC" id="CG7639-RB">
    <property type="organism name" value="d. melanogaster"/>
</dbReference>
<dbReference type="AGR" id="FB:FBgn0033989"/>
<dbReference type="FlyBase" id="FBgn0033989">
    <property type="gene designation" value="CG7639"/>
</dbReference>
<dbReference type="VEuPathDB" id="VectorBase:FBgn0033989"/>
<dbReference type="eggNOG" id="KOG2602">
    <property type="taxonomic scope" value="Eukaryota"/>
</dbReference>
<dbReference type="GeneTree" id="ENSGT00390000011355"/>
<dbReference type="HOGENOM" id="CLU_014798_3_0_1"/>
<dbReference type="InParanoid" id="Q9V784"/>
<dbReference type="OMA" id="SGIWRQI"/>
<dbReference type="OrthoDB" id="1724197at2759"/>
<dbReference type="PhylomeDB" id="Q9V784"/>
<dbReference type="Reactome" id="R-DME-9013404">
    <property type="pathway name" value="RAC2 GTPase cycle"/>
</dbReference>
<dbReference type="BioGRID-ORCS" id="36675">
    <property type="hits" value="0 hits in 1 CRISPR screen"/>
</dbReference>
<dbReference type="GenomeRNAi" id="36675"/>
<dbReference type="PRO" id="PR:Q9V784"/>
<dbReference type="Proteomes" id="UP000000803">
    <property type="component" value="Chromosome 2R"/>
</dbReference>
<dbReference type="Bgee" id="FBgn0033989">
    <property type="expression patterns" value="Expressed in adult hindgut (Drosophila) and 169 other cell types or tissues"/>
</dbReference>
<dbReference type="ExpressionAtlas" id="Q9V784">
    <property type="expression patterns" value="baseline and differential"/>
</dbReference>
<dbReference type="GO" id="GO:0005741">
    <property type="term" value="C:mitochondrial outer membrane"/>
    <property type="evidence" value="ECO:0000250"/>
    <property type="project" value="FlyBase"/>
</dbReference>
<dbReference type="GO" id="GO:0001401">
    <property type="term" value="C:SAM complex"/>
    <property type="evidence" value="ECO:0000250"/>
    <property type="project" value="FlyBase"/>
</dbReference>
<dbReference type="GO" id="GO:0032977">
    <property type="term" value="F:membrane insertase activity"/>
    <property type="evidence" value="ECO:0000250"/>
    <property type="project" value="FlyBase"/>
</dbReference>
<dbReference type="GO" id="GO:0008320">
    <property type="term" value="F:protein transmembrane transporter activity"/>
    <property type="evidence" value="ECO:0000250"/>
    <property type="project" value="FlyBase"/>
</dbReference>
<dbReference type="GO" id="GO:0033108">
    <property type="term" value="P:mitochondrial respiratory chain complex assembly"/>
    <property type="evidence" value="ECO:0000318"/>
    <property type="project" value="GO_Central"/>
</dbReference>
<dbReference type="GO" id="GO:0030150">
    <property type="term" value="P:protein import into mitochondrial matrix"/>
    <property type="evidence" value="ECO:0000250"/>
    <property type="project" value="FlyBase"/>
</dbReference>
<dbReference type="GO" id="GO:0045040">
    <property type="term" value="P:protein insertion into mitochondrial outer membrane"/>
    <property type="evidence" value="ECO:0000318"/>
    <property type="project" value="GO_Central"/>
</dbReference>
<dbReference type="FunFam" id="2.40.160.50:FF:000002">
    <property type="entry name" value="sorting and assembly machinery component 50 homolog"/>
    <property type="match status" value="1"/>
</dbReference>
<dbReference type="Gene3D" id="2.40.160.50">
    <property type="entry name" value="membrane protein fhac: a member of the omp85/tpsb transporter family"/>
    <property type="match status" value="1"/>
</dbReference>
<dbReference type="InterPro" id="IPR000184">
    <property type="entry name" value="Bac_surfAg_D15"/>
</dbReference>
<dbReference type="InterPro" id="IPR039910">
    <property type="entry name" value="D15-like"/>
</dbReference>
<dbReference type="InterPro" id="IPR034746">
    <property type="entry name" value="POTRA"/>
</dbReference>
<dbReference type="PANTHER" id="PTHR12815:SF18">
    <property type="entry name" value="SORTING AND ASSEMBLY MACHINERY COMPONENT 50 HOMOLOG"/>
    <property type="match status" value="1"/>
</dbReference>
<dbReference type="PANTHER" id="PTHR12815">
    <property type="entry name" value="SORTING AND ASSEMBLY MACHINERY SAMM50 PROTEIN FAMILY MEMBER"/>
    <property type="match status" value="1"/>
</dbReference>
<dbReference type="Pfam" id="PF01103">
    <property type="entry name" value="Omp85"/>
    <property type="match status" value="1"/>
</dbReference>
<dbReference type="PROSITE" id="PS51779">
    <property type="entry name" value="POTRA"/>
    <property type="match status" value="1"/>
</dbReference>
<feature type="chain" id="PRO_0000215941" description="SAM50-like protein CG7639">
    <location>
        <begin position="1"/>
        <end position="443"/>
    </location>
</feature>
<feature type="domain" description="POTRA" evidence="3">
    <location>
        <begin position="23"/>
        <end position="101"/>
    </location>
</feature>
<name>SAM50_DROME</name>
<keyword id="KW-0472">Membrane</keyword>
<keyword id="KW-0496">Mitochondrion</keyword>
<keyword id="KW-1000">Mitochondrion outer membrane</keyword>
<keyword id="KW-1185">Reference proteome</keyword>
<keyword id="KW-0812">Transmembrane</keyword>
<keyword id="KW-1134">Transmembrane beta strand</keyword>
<organism>
    <name type="scientific">Drosophila melanogaster</name>
    <name type="common">Fruit fly</name>
    <dbReference type="NCBI Taxonomy" id="7227"/>
    <lineage>
        <taxon>Eukaryota</taxon>
        <taxon>Metazoa</taxon>
        <taxon>Ecdysozoa</taxon>
        <taxon>Arthropoda</taxon>
        <taxon>Hexapoda</taxon>
        <taxon>Insecta</taxon>
        <taxon>Pterygota</taxon>
        <taxon>Neoptera</taxon>
        <taxon>Endopterygota</taxon>
        <taxon>Diptera</taxon>
        <taxon>Brachycera</taxon>
        <taxon>Muscomorpha</taxon>
        <taxon>Ephydroidea</taxon>
        <taxon>Drosophilidae</taxon>
        <taxon>Drosophila</taxon>
        <taxon>Sophophora</taxon>
    </lineage>
</organism>
<evidence type="ECO:0000250" key="1"/>
<evidence type="ECO:0000250" key="2">
    <source>
        <dbReference type="UniProtKB" id="Q9Y512"/>
    </source>
</evidence>
<evidence type="ECO:0000255" key="3">
    <source>
        <dbReference type="PROSITE-ProRule" id="PRU01115"/>
    </source>
</evidence>
<evidence type="ECO:0000305" key="4"/>